<protein>
    <recommendedName>
        <fullName evidence="1">UPF0352 protein YejL</fullName>
    </recommendedName>
</protein>
<dbReference type="EMBL" id="AM933172">
    <property type="protein sequence ID" value="CAR33805.1"/>
    <property type="molecule type" value="Genomic_DNA"/>
</dbReference>
<dbReference type="RefSeq" id="WP_001135904.1">
    <property type="nucleotide sequence ID" value="NC_011294.1"/>
</dbReference>
<dbReference type="SMR" id="B5R197"/>
<dbReference type="KEGG" id="set:SEN2220"/>
<dbReference type="HOGENOM" id="CLU_175457_0_0_6"/>
<dbReference type="Proteomes" id="UP000000613">
    <property type="component" value="Chromosome"/>
</dbReference>
<dbReference type="Gene3D" id="1.10.3390.10">
    <property type="entry name" value="YejL-like"/>
    <property type="match status" value="1"/>
</dbReference>
<dbReference type="HAMAP" id="MF_00816">
    <property type="entry name" value="UPF0352"/>
    <property type="match status" value="1"/>
</dbReference>
<dbReference type="InterPro" id="IPR009857">
    <property type="entry name" value="UPF0352"/>
</dbReference>
<dbReference type="InterPro" id="IPR023202">
    <property type="entry name" value="YejL_sf"/>
</dbReference>
<dbReference type="NCBIfam" id="NF010242">
    <property type="entry name" value="PRK13689.1"/>
    <property type="match status" value="1"/>
</dbReference>
<dbReference type="Pfam" id="PF07208">
    <property type="entry name" value="DUF1414"/>
    <property type="match status" value="1"/>
</dbReference>
<dbReference type="PIRSF" id="PIRSF006188">
    <property type="entry name" value="UCP006188"/>
    <property type="match status" value="1"/>
</dbReference>
<dbReference type="SUPFAM" id="SSF158651">
    <property type="entry name" value="YejL-like"/>
    <property type="match status" value="1"/>
</dbReference>
<name>YEJL_SALEP</name>
<comment type="similarity">
    <text evidence="1">Belongs to the UPF0352 family.</text>
</comment>
<evidence type="ECO:0000255" key="1">
    <source>
        <dbReference type="HAMAP-Rule" id="MF_00816"/>
    </source>
</evidence>
<proteinExistence type="inferred from homology"/>
<accession>B5R197</accession>
<organism>
    <name type="scientific">Salmonella enteritidis PT4 (strain P125109)</name>
    <dbReference type="NCBI Taxonomy" id="550537"/>
    <lineage>
        <taxon>Bacteria</taxon>
        <taxon>Pseudomonadati</taxon>
        <taxon>Pseudomonadota</taxon>
        <taxon>Gammaproteobacteria</taxon>
        <taxon>Enterobacterales</taxon>
        <taxon>Enterobacteriaceae</taxon>
        <taxon>Salmonella</taxon>
    </lineage>
</organism>
<gene>
    <name evidence="1" type="primary">yejL</name>
    <name type="ordered locus">SEN2220</name>
</gene>
<sequence>MPQLSRYSDEHVEQLLSELLSVLEKHKAPTDLSLMVLGNMVTNLINTSVAPAQRQAIANSFARALQSSISEDNAH</sequence>
<feature type="chain" id="PRO_1000199595" description="UPF0352 protein YejL">
    <location>
        <begin position="1"/>
        <end position="75"/>
    </location>
</feature>
<reference key="1">
    <citation type="journal article" date="2008" name="Genome Res.">
        <title>Comparative genome analysis of Salmonella enteritidis PT4 and Salmonella gallinarum 287/91 provides insights into evolutionary and host adaptation pathways.</title>
        <authorList>
            <person name="Thomson N.R."/>
            <person name="Clayton D.J."/>
            <person name="Windhorst D."/>
            <person name="Vernikos G."/>
            <person name="Davidson S."/>
            <person name="Churcher C."/>
            <person name="Quail M.A."/>
            <person name="Stevens M."/>
            <person name="Jones M.A."/>
            <person name="Watson M."/>
            <person name="Barron A."/>
            <person name="Layton A."/>
            <person name="Pickard D."/>
            <person name="Kingsley R.A."/>
            <person name="Bignell A."/>
            <person name="Clark L."/>
            <person name="Harris B."/>
            <person name="Ormond D."/>
            <person name="Abdellah Z."/>
            <person name="Brooks K."/>
            <person name="Cherevach I."/>
            <person name="Chillingworth T."/>
            <person name="Woodward J."/>
            <person name="Norberczak H."/>
            <person name="Lord A."/>
            <person name="Arrowsmith C."/>
            <person name="Jagels K."/>
            <person name="Moule S."/>
            <person name="Mungall K."/>
            <person name="Saunders M."/>
            <person name="Whitehead S."/>
            <person name="Chabalgoity J.A."/>
            <person name="Maskell D."/>
            <person name="Humphreys T."/>
            <person name="Roberts M."/>
            <person name="Barrow P.A."/>
            <person name="Dougan G."/>
            <person name="Parkhill J."/>
        </authorList>
    </citation>
    <scope>NUCLEOTIDE SEQUENCE [LARGE SCALE GENOMIC DNA]</scope>
    <source>
        <strain>P125109</strain>
    </source>
</reference>